<reference key="1">
    <citation type="journal article" date="1999" name="Biol. Reprod.">
        <title>Molecular cloning of the ovine Growth/Differentiation factor-9 gene and expression of growth/differentiation factor-9 in ovine and bovine ovaries.</title>
        <authorList>
            <person name="Bodensteiner K.J."/>
            <person name="Clay C.M."/>
            <person name="Moeller C.L."/>
            <person name="Sawyer H.R."/>
        </authorList>
    </citation>
    <scope>NUCLEOTIDE SEQUENCE [GENOMIC DNA]</scope>
</reference>
<reference key="2">
    <citation type="journal article" date="2012" name="Mol. Cell. Endocrinol.">
        <title>The ratio of growth differentiation factor 9: bone morphogenetic protein 15 mRNA expression is tightly co-regulated and differs between species over a wide range of ovulation rates.</title>
        <authorList>
            <person name="Crawford J.L."/>
            <person name="McNatty K.P."/>
        </authorList>
    </citation>
    <scope>SPECIES-SPECIFIC OVULATION RATE DETERMINATION</scope>
</reference>
<name>GDF9_SHEEP</name>
<keyword id="KW-0165">Cleavage on pair of basic residues</keyword>
<keyword id="KW-0202">Cytokine</keyword>
<keyword id="KW-1015">Disulfide bond</keyword>
<keyword id="KW-0325">Glycoprotein</keyword>
<keyword id="KW-0339">Growth factor</keyword>
<keyword id="KW-0597">Phosphoprotein</keyword>
<keyword id="KW-1185">Reference proteome</keyword>
<keyword id="KW-0964">Secreted</keyword>
<keyword id="KW-0732">Signal</keyword>
<feature type="signal peptide" evidence="2">
    <location>
        <begin position="1"/>
        <end position="27"/>
    </location>
</feature>
<feature type="propeptide" id="PRO_0000033984" evidence="2">
    <location>
        <begin position="28"/>
        <end position="318"/>
    </location>
</feature>
<feature type="chain" id="PRO_0000033985" description="Growth/differentiation factor 9">
    <location>
        <begin position="319"/>
        <end position="453"/>
    </location>
</feature>
<feature type="region of interest" description="Disordered" evidence="3">
    <location>
        <begin position="304"/>
        <end position="328"/>
    </location>
</feature>
<feature type="compositionally biased region" description="Basic and acidic residues" evidence="3">
    <location>
        <begin position="318"/>
        <end position="328"/>
    </location>
</feature>
<feature type="glycosylation site" description="N-linked (GlcNAc...) asparagine" evidence="2">
    <location>
        <position position="163"/>
    </location>
</feature>
<feature type="glycosylation site" description="N-linked (GlcNAc...) asparagine" evidence="2">
    <location>
        <position position="236"/>
    </location>
</feature>
<feature type="glycosylation site" description="N-linked (GlcNAc...) asparagine" evidence="2">
    <location>
        <position position="255"/>
    </location>
</feature>
<feature type="glycosylation site" description="N-linked (GlcNAc...) asparagine" evidence="2">
    <location>
        <position position="269"/>
    </location>
</feature>
<feature type="glycosylation site" description="N-linked (GlcNAc...) asparagine" evidence="2">
    <location>
        <position position="337"/>
    </location>
</feature>
<feature type="disulfide bond" evidence="1">
    <location>
        <begin position="352"/>
        <end position="418"/>
    </location>
</feature>
<feature type="disulfide bond" evidence="1">
    <location>
        <begin position="381"/>
        <end position="450"/>
    </location>
</feature>
<feature type="disulfide bond" evidence="1">
    <location>
        <begin position="385"/>
        <end position="452"/>
    </location>
</feature>
<protein>
    <recommendedName>
        <fullName>Growth/differentiation factor 9</fullName>
        <shortName>GDF-9</shortName>
    </recommendedName>
</protein>
<dbReference type="EMBL" id="AF078545">
    <property type="protein sequence ID" value="AAC28089.2"/>
    <property type="molecule type" value="Genomic_DNA"/>
</dbReference>
<dbReference type="RefSeq" id="NP_001136360.2">
    <property type="nucleotide sequence ID" value="NM_001142888.2"/>
</dbReference>
<dbReference type="SMR" id="O77681"/>
<dbReference type="STRING" id="9940.ENSOARP00000014175"/>
<dbReference type="GlyCosmos" id="O77681">
    <property type="glycosylation" value="5 sites, No reported glycans"/>
</dbReference>
<dbReference type="PaxDb" id="9940-ENSOARP00000014175"/>
<dbReference type="Ensembl" id="ENSOART00215092393">
    <property type="protein sequence ID" value="ENSOARP00215050255"/>
    <property type="gene ID" value="ENSOARG00215054795"/>
</dbReference>
<dbReference type="Ensembl" id="ENSOART00220081205">
    <property type="protein sequence ID" value="ENSOARP00220043666"/>
    <property type="gene ID" value="ENSOARG00220048805"/>
</dbReference>
<dbReference type="Ensembl" id="ENSOART00225085327">
    <property type="protein sequence ID" value="ENSOARP00225044521"/>
    <property type="gene ID" value="ENSOARG00225051262"/>
</dbReference>
<dbReference type="GeneID" id="100217402"/>
<dbReference type="KEGG" id="oas:100217402"/>
<dbReference type="CTD" id="2661"/>
<dbReference type="eggNOG" id="KOG3900">
    <property type="taxonomic scope" value="Eukaryota"/>
</dbReference>
<dbReference type="OrthoDB" id="6427922at2759"/>
<dbReference type="Proteomes" id="UP000002356">
    <property type="component" value="Unplaced"/>
</dbReference>
<dbReference type="GO" id="GO:0005737">
    <property type="term" value="C:cytoplasm"/>
    <property type="evidence" value="ECO:0007669"/>
    <property type="project" value="Ensembl"/>
</dbReference>
<dbReference type="GO" id="GO:0005615">
    <property type="term" value="C:extracellular space"/>
    <property type="evidence" value="ECO:0007669"/>
    <property type="project" value="UniProtKB-KW"/>
</dbReference>
<dbReference type="GO" id="GO:0005125">
    <property type="term" value="F:cytokine activity"/>
    <property type="evidence" value="ECO:0007669"/>
    <property type="project" value="UniProtKB-KW"/>
</dbReference>
<dbReference type="GO" id="GO:0008083">
    <property type="term" value="F:growth factor activity"/>
    <property type="evidence" value="ECO:0007669"/>
    <property type="project" value="UniProtKB-KW"/>
</dbReference>
<dbReference type="GO" id="GO:0030308">
    <property type="term" value="P:negative regulation of cell growth"/>
    <property type="evidence" value="ECO:0007669"/>
    <property type="project" value="Ensembl"/>
</dbReference>
<dbReference type="GO" id="GO:0001555">
    <property type="term" value="P:oocyte growth"/>
    <property type="evidence" value="ECO:0007669"/>
    <property type="project" value="Ensembl"/>
</dbReference>
<dbReference type="GO" id="GO:0008284">
    <property type="term" value="P:positive regulation of cell population proliferation"/>
    <property type="evidence" value="ECO:0007669"/>
    <property type="project" value="Ensembl"/>
</dbReference>
<dbReference type="GO" id="GO:2000870">
    <property type="term" value="P:regulation of progesterone secretion"/>
    <property type="evidence" value="ECO:0007669"/>
    <property type="project" value="Ensembl"/>
</dbReference>
<dbReference type="CDD" id="cd19403">
    <property type="entry name" value="TGF_beta_GDF9"/>
    <property type="match status" value="1"/>
</dbReference>
<dbReference type="FunFam" id="2.10.90.10:FF:000012">
    <property type="entry name" value="Growth/differentiation factor 9 (Predicted)"/>
    <property type="match status" value="1"/>
</dbReference>
<dbReference type="Gene3D" id="2.10.90.10">
    <property type="entry name" value="Cystine-knot cytokines"/>
    <property type="match status" value="1"/>
</dbReference>
<dbReference type="InterPro" id="IPR029034">
    <property type="entry name" value="Cystine-knot_cytokine"/>
</dbReference>
<dbReference type="InterPro" id="IPR015617">
    <property type="entry name" value="Growth_differentiation_fac-9_C"/>
</dbReference>
<dbReference type="InterPro" id="IPR001839">
    <property type="entry name" value="TGF-b_C"/>
</dbReference>
<dbReference type="InterPro" id="IPR015615">
    <property type="entry name" value="TGF-beta-rel"/>
</dbReference>
<dbReference type="InterPro" id="IPR017948">
    <property type="entry name" value="TGFb_CS"/>
</dbReference>
<dbReference type="PANTHER" id="PTHR11848:SF19">
    <property type="entry name" value="GROWTH_DIFFERENTIATION FACTOR 9"/>
    <property type="match status" value="1"/>
</dbReference>
<dbReference type="PANTHER" id="PTHR11848">
    <property type="entry name" value="TGF-BETA FAMILY"/>
    <property type="match status" value="1"/>
</dbReference>
<dbReference type="Pfam" id="PF00019">
    <property type="entry name" value="TGF_beta"/>
    <property type="match status" value="1"/>
</dbReference>
<dbReference type="SMART" id="SM00204">
    <property type="entry name" value="TGFB"/>
    <property type="match status" value="1"/>
</dbReference>
<dbReference type="SUPFAM" id="SSF57501">
    <property type="entry name" value="Cystine-knot cytokines"/>
    <property type="match status" value="1"/>
</dbReference>
<dbReference type="PROSITE" id="PS00250">
    <property type="entry name" value="TGF_BETA_1"/>
    <property type="match status" value="1"/>
</dbReference>
<dbReference type="PROSITE" id="PS51362">
    <property type="entry name" value="TGF_BETA_2"/>
    <property type="match status" value="1"/>
</dbReference>
<accession>O77681</accession>
<proteinExistence type="inferred from homology"/>
<evidence type="ECO:0000250" key="1"/>
<evidence type="ECO:0000255" key="2"/>
<evidence type="ECO:0000256" key="3">
    <source>
        <dbReference type="SAM" id="MobiDB-lite"/>
    </source>
</evidence>
<evidence type="ECO:0000305" key="4"/>
<gene>
    <name type="primary">GDF9</name>
</gene>
<sequence>MALPNKFFLWFCCFAWLCFPISLDSLPSRGEAQIVARTALESEAETWSLLNHLGGRHRPGLLSPLLEVLYDGHGEPPRLQPDDRALRYMKRLYKAYATKEGTPKSNRRHLYNTVRLFTPCAQHKQAPGDLAAGTFPSVDLLFNLDRVTVVEHLFKSVLLYTFNNSISFPFPVKCICNLVIKEPEFSSKTLPRAPYSFTYNSQFEFRKKYKWMEIDVTAPLEPLVASHKRNIHMSVNFTCAEDQLQHPSARDSLFNMTLLVAPSLLLYLNDTSAQAFHRWHSLHPKRKPSQGPDQKRGLSAYPVGEEAAEGVRSSRHRRDQESASSELKKPLVPASVNLSEYFKQFLFPQNECELHDFRLSFSQLKWDNWIVAPHKYNPRYCKGDCPRAVGHRYGSPVHTMVQNIIHEKLDSSVPRPSCVPAKYSPLSVLAIEPDGSIAYKEYEDMIATKCTCR</sequence>
<organism>
    <name type="scientific">Ovis aries</name>
    <name type="common">Sheep</name>
    <dbReference type="NCBI Taxonomy" id="9940"/>
    <lineage>
        <taxon>Eukaryota</taxon>
        <taxon>Metazoa</taxon>
        <taxon>Chordata</taxon>
        <taxon>Craniata</taxon>
        <taxon>Vertebrata</taxon>
        <taxon>Euteleostomi</taxon>
        <taxon>Mammalia</taxon>
        <taxon>Eutheria</taxon>
        <taxon>Laurasiatheria</taxon>
        <taxon>Artiodactyla</taxon>
        <taxon>Ruminantia</taxon>
        <taxon>Pecora</taxon>
        <taxon>Bovidae</taxon>
        <taxon>Caprinae</taxon>
        <taxon>Ovis</taxon>
    </lineage>
</organism>
<comment type="function">
    <text>Required for ovarian folliculogenesis.</text>
</comment>
<comment type="subunit">
    <text evidence="1 4">Homodimer or heterodimer (Potential). But, in contrast to other members of this family, cannot be disulfide-linked (By similarity).</text>
</comment>
<comment type="subcellular location">
    <subcellularLocation>
        <location evidence="1">Secreted</location>
    </subcellularLocation>
</comment>
<comment type="PTM">
    <text evidence="1">Phosphorylated; phosphorylation is critical for GDF9 function.</text>
</comment>
<comment type="miscellaneous">
    <text>Ovarian physiology and fertility are controlled by endocrine and paracrine signals. These act in a species-dependent manner and determine the ovulation quota in different mammalian species. While humans, and mammals such as the cow or red deer, normally ovulate only one egg per cycle, other mammals such as mouse and pig can ovulate in excess of ten per cycle. The mechanisms that regulate the species-specific differences in the number of follicles that go onto ovulate during each reproductive cycle are poorly understood. According to PubMed:21970812, mRNA expression levels of GDF9 and BMP15 are tightly coregulated within each species and influence species-specific ovulation-rates.</text>
</comment>
<comment type="similarity">
    <text evidence="4">Belongs to the TGF-beta family.</text>
</comment>